<sequence length="336" mass="37542">MSQPSGGRAPGTRIYSWSCPTVMSPGEKLDPIPDSFILQPPVFHPVVPYVTTIFGGLHAGKMVMLQGVVPLDAHRFQVDFQCGCSLCPRPDIAFHFNPRFHTTKPHVICNTLHGGRWQREARWPHLALRRGSSFLILFLFGNEEVKVSVNGQHFLHFRYRLPLSHVDTLGIFGDILVEAVGFLNINPFVEGSREYPAGHPFLLMSPRLEVPCSHALPQGLSPGQVIIVRGLVLQEPKHFTVSLRDQAAHAPVTLRASFADRTLAWISRWGQKKLISAPFLFYPQRFFEVLLLFQEGGLKLALNGQGLGATSMNQQALEQLRELRISGSVQLYCVHS</sequence>
<proteinExistence type="evidence at protein level"/>
<evidence type="ECO:0000255" key="1">
    <source>
        <dbReference type="PROSITE-ProRule" id="PRU00639"/>
    </source>
</evidence>
<evidence type="ECO:0000303" key="2">
    <source>
    </source>
</evidence>
<evidence type="ECO:0000303" key="3">
    <source>
    </source>
</evidence>
<keyword id="KW-0025">Alternative splicing</keyword>
<keyword id="KW-0053">Apoptosis</keyword>
<keyword id="KW-0430">Lectin</keyword>
<keyword id="KW-0539">Nucleus</keyword>
<keyword id="KW-1267">Proteomics identification</keyword>
<keyword id="KW-1185">Reference proteome</keyword>
<keyword id="KW-0677">Repeat</keyword>
<gene>
    <name type="primary">LGALS12</name>
    <name type="synonym">GRIP1</name>
</gene>
<feature type="chain" id="PRO_0000076949" description="Galectin-12">
    <location>
        <begin position="1"/>
        <end position="336"/>
    </location>
</feature>
<feature type="domain" description="Galectin 1" evidence="1">
    <location>
        <begin position="49"/>
        <end position="183"/>
    </location>
</feature>
<feature type="domain" description="Galectin 2" evidence="1">
    <location>
        <begin position="212"/>
        <end position="336"/>
    </location>
</feature>
<feature type="splice variant" id="VSP_003100" description="In isoform B and isoform D." evidence="2 3">
    <location>
        <begin position="1"/>
        <end position="61"/>
    </location>
</feature>
<feature type="splice variant" id="VSP_003099" description="In isoform E and isoform F." evidence="2">
    <location>
        <begin position="1"/>
        <end position="22"/>
    </location>
</feature>
<feature type="splice variant" id="VSP_003101" description="In isoform F and isoform G." evidence="2 3">
    <original>H</original>
    <variation>HS</variation>
    <location>
        <position position="74"/>
    </location>
</feature>
<feature type="splice variant" id="VSP_003102" description="In isoform C and isoform D." evidence="3">
    <location>
        <begin position="200"/>
        <end position="208"/>
    </location>
</feature>
<accession>Q96DT0</accession>
<accession>B2R9N2</accession>
<accession>G5E970</accession>
<accession>Q96DS9</accession>
<accession>Q96PR9</accession>
<accession>Q9H258</accession>
<accession>Q9H259</accession>
<accession>Q9NZ02</accession>
<organism>
    <name type="scientific">Homo sapiens</name>
    <name type="common">Human</name>
    <dbReference type="NCBI Taxonomy" id="9606"/>
    <lineage>
        <taxon>Eukaryota</taxon>
        <taxon>Metazoa</taxon>
        <taxon>Chordata</taxon>
        <taxon>Craniata</taxon>
        <taxon>Vertebrata</taxon>
        <taxon>Euteleostomi</taxon>
        <taxon>Mammalia</taxon>
        <taxon>Eutheria</taxon>
        <taxon>Euarchontoglires</taxon>
        <taxon>Primates</taxon>
        <taxon>Haplorrhini</taxon>
        <taxon>Catarrhini</taxon>
        <taxon>Hominidae</taxon>
        <taxon>Homo</taxon>
    </lineage>
</organism>
<name>LEG12_HUMAN</name>
<dbReference type="EMBL" id="AF244974">
    <property type="protein sequence ID" value="AAK77328.1"/>
    <property type="molecule type" value="mRNA"/>
</dbReference>
<dbReference type="EMBL" id="AF244975">
    <property type="protein sequence ID" value="AAK77329.1"/>
    <property type="molecule type" value="mRNA"/>
</dbReference>
<dbReference type="EMBL" id="AF244976">
    <property type="protein sequence ID" value="AAK77330.1"/>
    <property type="molecule type" value="mRNA"/>
</dbReference>
<dbReference type="EMBL" id="AF244977">
    <property type="protein sequence ID" value="AAK77331.1"/>
    <property type="molecule type" value="mRNA"/>
</dbReference>
<dbReference type="EMBL" id="AF310686">
    <property type="protein sequence ID" value="AAG40863.1"/>
    <property type="molecule type" value="mRNA"/>
</dbReference>
<dbReference type="EMBL" id="AF310687">
    <property type="protein sequence ID" value="AAG40864.1"/>
    <property type="molecule type" value="mRNA"/>
</dbReference>
<dbReference type="EMBL" id="AK313851">
    <property type="protein sequence ID" value="BAG36579.1"/>
    <property type="molecule type" value="mRNA"/>
</dbReference>
<dbReference type="EMBL" id="AF222695">
    <property type="protein sequence ID" value="AAF34677.1"/>
    <property type="molecule type" value="mRNA"/>
</dbReference>
<dbReference type="EMBL" id="AP001591">
    <property type="status" value="NOT_ANNOTATED_CDS"/>
    <property type="molecule type" value="Genomic_DNA"/>
</dbReference>
<dbReference type="EMBL" id="CH471076">
    <property type="protein sequence ID" value="EAW74151.1"/>
    <property type="molecule type" value="Genomic_DNA"/>
</dbReference>
<dbReference type="EMBL" id="CH471076">
    <property type="protein sequence ID" value="EAW74152.1"/>
    <property type="molecule type" value="Genomic_DNA"/>
</dbReference>
<dbReference type="EMBL" id="CH471076">
    <property type="protein sequence ID" value="EAW74155.1"/>
    <property type="molecule type" value="Genomic_DNA"/>
</dbReference>
<dbReference type="EMBL" id="BC028222">
    <property type="protein sequence ID" value="AAH28222.1"/>
    <property type="molecule type" value="mRNA"/>
</dbReference>
<dbReference type="CCDS" id="CCDS44633.2">
    <molecule id="Q96DT0-6"/>
</dbReference>
<dbReference type="CCDS" id="CCDS44634.1">
    <molecule id="Q96DT0-2"/>
</dbReference>
<dbReference type="CCDS" id="CCDS44635.1">
    <molecule id="Q96DT0-4"/>
</dbReference>
<dbReference type="CCDS" id="CCDS8045.2">
    <molecule id="Q96DT0-5"/>
</dbReference>
<dbReference type="RefSeq" id="NP_001136007.2">
    <molecule id="Q96DT0-6"/>
    <property type="nucleotide sequence ID" value="NM_001142535.2"/>
</dbReference>
<dbReference type="RefSeq" id="NP_001136008.1">
    <property type="nucleotide sequence ID" value="NM_001142536.1"/>
</dbReference>
<dbReference type="RefSeq" id="NP_001136009.1">
    <molecule id="Q96DT0-2"/>
    <property type="nucleotide sequence ID" value="NM_001142537.2"/>
</dbReference>
<dbReference type="RefSeq" id="NP_001136010.1">
    <molecule id="Q96DT0-4"/>
    <property type="nucleotide sequence ID" value="NM_001142538.2"/>
</dbReference>
<dbReference type="RefSeq" id="NP_149092.2">
    <molecule id="Q96DT0-5"/>
    <property type="nucleotide sequence ID" value="NM_033101.3"/>
</dbReference>
<dbReference type="SMR" id="Q96DT0"/>
<dbReference type="BioGRID" id="124475">
    <property type="interactions" value="16"/>
</dbReference>
<dbReference type="FunCoup" id="Q96DT0">
    <property type="interactions" value="12"/>
</dbReference>
<dbReference type="IntAct" id="Q96DT0">
    <property type="interactions" value="14"/>
</dbReference>
<dbReference type="STRING" id="9606.ENSP00000339374"/>
<dbReference type="GlyGen" id="Q96DT0">
    <property type="glycosylation" value="1 site, 1 O-linked glycan (1 site)"/>
</dbReference>
<dbReference type="iPTMnet" id="Q96DT0"/>
<dbReference type="PhosphoSitePlus" id="Q96DT0"/>
<dbReference type="BioMuta" id="LGALS12"/>
<dbReference type="DMDM" id="20138669"/>
<dbReference type="MassIVE" id="Q96DT0"/>
<dbReference type="PaxDb" id="9606-ENSP00000339374"/>
<dbReference type="PeptideAtlas" id="Q96DT0"/>
<dbReference type="ProteomicsDB" id="33850"/>
<dbReference type="ProteomicsDB" id="76313">
    <molecule id="Q96DT0-1"/>
</dbReference>
<dbReference type="ProteomicsDB" id="76314">
    <molecule id="Q96DT0-2"/>
</dbReference>
<dbReference type="ProteomicsDB" id="76315">
    <molecule id="Q96DT0-3"/>
</dbReference>
<dbReference type="ProteomicsDB" id="76316">
    <molecule id="Q96DT0-4"/>
</dbReference>
<dbReference type="ProteomicsDB" id="76317">
    <molecule id="Q96DT0-5"/>
</dbReference>
<dbReference type="ProteomicsDB" id="76318">
    <molecule id="Q96DT0-6"/>
</dbReference>
<dbReference type="Antibodypedia" id="28944">
    <property type="antibodies" value="116 antibodies from 14 providers"/>
</dbReference>
<dbReference type="DNASU" id="85329"/>
<dbReference type="Ensembl" id="ENST00000340246.10">
    <molecule id="Q96DT0-6"/>
    <property type="protein sequence ID" value="ENSP00000339374.6"/>
    <property type="gene ID" value="ENSG00000133317.16"/>
</dbReference>
<dbReference type="Ensembl" id="ENST00000394618.9">
    <molecule id="Q96DT0-5"/>
    <property type="protein sequence ID" value="ENSP00000378116.4"/>
    <property type="gene ID" value="ENSG00000133317.16"/>
</dbReference>
<dbReference type="Ensembl" id="ENST00000415491.6">
    <molecule id="Q96DT0-2"/>
    <property type="protein sequence ID" value="ENSP00000394659.2"/>
    <property type="gene ID" value="ENSG00000133317.16"/>
</dbReference>
<dbReference type="Ensembl" id="ENST00000425950.2">
    <molecule id="Q96DT0-4"/>
    <property type="protein sequence ID" value="ENSP00000399093.2"/>
    <property type="gene ID" value="ENSG00000133317.16"/>
</dbReference>
<dbReference type="Ensembl" id="ENST00000674247.1">
    <molecule id="Q96DT0-7"/>
    <property type="protein sequence ID" value="ENSP00000501500.1"/>
    <property type="gene ID" value="ENSG00000133317.16"/>
</dbReference>
<dbReference type="GeneID" id="85329"/>
<dbReference type="KEGG" id="hsa:85329"/>
<dbReference type="MANE-Select" id="ENST00000394618.9">
    <molecule id="Q96DT0-5"/>
    <property type="protein sequence ID" value="ENSP00000378116.4"/>
    <property type="RefSeq nucleotide sequence ID" value="NM_033101.4"/>
    <property type="RefSeq protein sequence ID" value="NP_149092.3"/>
</dbReference>
<dbReference type="UCSC" id="uc001nxa.3">
    <molecule id="Q96DT0-1"/>
    <property type="organism name" value="human"/>
</dbReference>
<dbReference type="AGR" id="HGNC:15788"/>
<dbReference type="CTD" id="85329"/>
<dbReference type="DisGeNET" id="85329"/>
<dbReference type="GeneCards" id="LGALS12"/>
<dbReference type="HGNC" id="HGNC:15788">
    <property type="gene designation" value="LGALS12"/>
</dbReference>
<dbReference type="HPA" id="ENSG00000133317">
    <property type="expression patterns" value="Tissue enhanced (adipose tissue, bone marrow, breast)"/>
</dbReference>
<dbReference type="MIM" id="606096">
    <property type="type" value="gene"/>
</dbReference>
<dbReference type="neXtProt" id="NX_Q96DT0"/>
<dbReference type="OpenTargets" id="ENSG00000133317"/>
<dbReference type="PharmGKB" id="PA30338"/>
<dbReference type="VEuPathDB" id="HostDB:ENSG00000133317"/>
<dbReference type="eggNOG" id="KOG3587">
    <property type="taxonomic scope" value="Eukaryota"/>
</dbReference>
<dbReference type="GeneTree" id="ENSGT00940000161499"/>
<dbReference type="HOGENOM" id="CLU_037794_1_0_1"/>
<dbReference type="InParanoid" id="Q96DT0"/>
<dbReference type="OrthoDB" id="6251307at2759"/>
<dbReference type="PAN-GO" id="Q96DT0">
    <property type="GO annotations" value="5 GO annotations based on evolutionary models"/>
</dbReference>
<dbReference type="PhylomeDB" id="Q96DT0"/>
<dbReference type="PathwayCommons" id="Q96DT0"/>
<dbReference type="SignaLink" id="Q96DT0"/>
<dbReference type="BioGRID-ORCS" id="85329">
    <property type="hits" value="4 hits in 1153 CRISPR screens"/>
</dbReference>
<dbReference type="ChiTaRS" id="LGALS12">
    <property type="organism name" value="human"/>
</dbReference>
<dbReference type="GenomeRNAi" id="85329"/>
<dbReference type="Pharos" id="Q96DT0">
    <property type="development level" value="Tbio"/>
</dbReference>
<dbReference type="PRO" id="PR:Q96DT0"/>
<dbReference type="Proteomes" id="UP000005640">
    <property type="component" value="Chromosome 11"/>
</dbReference>
<dbReference type="RNAct" id="Q96DT0">
    <property type="molecule type" value="protein"/>
</dbReference>
<dbReference type="Bgee" id="ENSG00000133317">
    <property type="expression patterns" value="Expressed in adipose tissue and 87 other cell types or tissues"/>
</dbReference>
<dbReference type="ExpressionAtlas" id="Q96DT0">
    <property type="expression patterns" value="baseline and differential"/>
</dbReference>
<dbReference type="GO" id="GO:0005737">
    <property type="term" value="C:cytoplasm"/>
    <property type="evidence" value="ECO:0000318"/>
    <property type="project" value="GO_Central"/>
</dbReference>
<dbReference type="GO" id="GO:0005739">
    <property type="term" value="C:mitochondrion"/>
    <property type="evidence" value="ECO:0007669"/>
    <property type="project" value="Ensembl"/>
</dbReference>
<dbReference type="GO" id="GO:0005634">
    <property type="term" value="C:nucleus"/>
    <property type="evidence" value="ECO:0007669"/>
    <property type="project" value="UniProtKB-SubCell"/>
</dbReference>
<dbReference type="GO" id="GO:0030395">
    <property type="term" value="F:lactose binding"/>
    <property type="evidence" value="ECO:0000314"/>
    <property type="project" value="MGI"/>
</dbReference>
<dbReference type="GO" id="GO:0097193">
    <property type="term" value="P:intrinsic apoptotic signaling pathway"/>
    <property type="evidence" value="ECO:0000314"/>
    <property type="project" value="MGI"/>
</dbReference>
<dbReference type="CDD" id="cd00070">
    <property type="entry name" value="GLECT"/>
    <property type="match status" value="1"/>
</dbReference>
<dbReference type="FunFam" id="2.60.120.200:FF:000115">
    <property type="entry name" value="Galectin"/>
    <property type="match status" value="1"/>
</dbReference>
<dbReference type="FunFam" id="2.60.120.200:FF:000156">
    <property type="entry name" value="Galectin"/>
    <property type="match status" value="1"/>
</dbReference>
<dbReference type="Gene3D" id="2.60.120.200">
    <property type="match status" value="2"/>
</dbReference>
<dbReference type="InterPro" id="IPR013320">
    <property type="entry name" value="ConA-like_dom_sf"/>
</dbReference>
<dbReference type="InterPro" id="IPR044156">
    <property type="entry name" value="Galectin-like"/>
</dbReference>
<dbReference type="InterPro" id="IPR001079">
    <property type="entry name" value="Galectin_CRD"/>
</dbReference>
<dbReference type="PANTHER" id="PTHR11346">
    <property type="entry name" value="GALECTIN"/>
    <property type="match status" value="1"/>
</dbReference>
<dbReference type="PANTHER" id="PTHR11346:SF111">
    <property type="entry name" value="GALECTIN-12"/>
    <property type="match status" value="1"/>
</dbReference>
<dbReference type="Pfam" id="PF00337">
    <property type="entry name" value="Gal-bind_lectin"/>
    <property type="match status" value="2"/>
</dbReference>
<dbReference type="SMART" id="SM00908">
    <property type="entry name" value="Gal-bind_lectin"/>
    <property type="match status" value="2"/>
</dbReference>
<dbReference type="SMART" id="SM00276">
    <property type="entry name" value="GLECT"/>
    <property type="match status" value="1"/>
</dbReference>
<dbReference type="SUPFAM" id="SSF49899">
    <property type="entry name" value="Concanavalin A-like lectins/glucanases"/>
    <property type="match status" value="2"/>
</dbReference>
<dbReference type="PROSITE" id="PS51304">
    <property type="entry name" value="GALECTIN"/>
    <property type="match status" value="2"/>
</dbReference>
<protein>
    <recommendedName>
        <fullName>Galectin-12</fullName>
        <shortName>Gal-12</shortName>
    </recommendedName>
    <alternativeName>
        <fullName>Galectin-related inhibitor of proliferation</fullName>
    </alternativeName>
</protein>
<comment type="function">
    <text>Binds lactose. May participate in the apoptosis of adipocytes.</text>
</comment>
<comment type="subcellular location">
    <subcellularLocation>
        <location>Nucleus</location>
    </subcellularLocation>
</comment>
<comment type="alternative products">
    <event type="alternative splicing"/>
    <isoform>
        <id>Q96DT0-1</id>
        <name>A</name>
        <sequence type="displayed"/>
    </isoform>
    <isoform>
        <id>Q96DT0-2</id>
        <name>B</name>
        <name>GRIP1a</name>
        <sequence type="described" ref="VSP_003100"/>
    </isoform>
    <isoform>
        <id>Q96DT0-3</id>
        <name>C</name>
        <sequence type="described" ref="VSP_003102"/>
    </isoform>
    <isoform>
        <id>Q96DT0-4</id>
        <name>D</name>
        <sequence type="described" ref="VSP_003100 VSP_003102"/>
    </isoform>
    <isoform>
        <id>Q96DT0-5</id>
        <name>E</name>
        <name>1</name>
        <sequence type="described" ref="VSP_003099"/>
    </isoform>
    <isoform>
        <id>Q96DT0-6</id>
        <name>F</name>
        <name>2</name>
        <sequence type="described" ref="VSP_003099 VSP_003101"/>
    </isoform>
    <isoform>
        <id>Q96DT0-7</id>
        <name>G</name>
        <sequence type="described" ref="VSP_003101"/>
    </isoform>
</comment>
<comment type="tissue specificity">
    <text>Not widely expressed. Predominantly expressed in adipose tissue.</text>
</comment>
<comment type="domain">
    <text>Contains two homologous but distinct carbohydrate-binding domains.</text>
</comment>
<comment type="online information" name="Functional Glycomics Gateway - Glycan Binding">
    <link uri="http://www.functionalglycomics.org/glycomics/GBPServlet?&amp;operationType=view&amp;cbpId=cbp_hum_Stlect_278"/>
    <text>Galectin-12</text>
</comment>
<reference key="1">
    <citation type="journal article" date="2001" name="J. Biol. Chem.">
        <title>Galectin-12, an adipose-expressed galectin-like molecule possessing apoptosis-inducing activity.</title>
        <authorList>
            <person name="Hotta K."/>
            <person name="Funahashi T."/>
            <person name="Matsukawa Y."/>
            <person name="Takahashi M."/>
            <person name="Nishizawa H."/>
            <person name="Kishida K."/>
            <person name="Matsuda M."/>
            <person name="Kuriyama H."/>
            <person name="Kihara S."/>
            <person name="Nakamura T."/>
            <person name="Tochino Y."/>
            <person name="Bodkin N.L."/>
            <person name="Hansen B.C."/>
            <person name="Matsuzawa Y."/>
        </authorList>
    </citation>
    <scope>NUCLEOTIDE SEQUENCE [MRNA] (ISOFORMS A; B; C; D AND G)</scope>
    <scope>CHARACTERIZATION</scope>
    <source>
        <tissue>Adipose tissue</tissue>
    </source>
</reference>
<reference key="2">
    <citation type="journal article" date="2001" name="J. Biol. Chem.">
        <title>Cell cycle regulation by galectin-12, a new member of the galectin superfamily.</title>
        <authorList>
            <person name="Yang R.-Y."/>
            <person name="Hsu D.K."/>
            <person name="Yu L."/>
            <person name="Ni J."/>
            <person name="Liu F.-T."/>
        </authorList>
    </citation>
    <scope>NUCLEOTIDE SEQUENCE [MRNA] (ISOFORMS B; E AND F)</scope>
    <source>
        <tissue>Retina</tissue>
    </source>
</reference>
<reference key="3">
    <citation type="journal article" date="2004" name="Nat. Genet.">
        <title>Complete sequencing and characterization of 21,243 full-length human cDNAs.</title>
        <authorList>
            <person name="Ota T."/>
            <person name="Suzuki Y."/>
            <person name="Nishikawa T."/>
            <person name="Otsuki T."/>
            <person name="Sugiyama T."/>
            <person name="Irie R."/>
            <person name="Wakamatsu A."/>
            <person name="Hayashi K."/>
            <person name="Sato H."/>
            <person name="Nagai K."/>
            <person name="Kimura K."/>
            <person name="Makita H."/>
            <person name="Sekine M."/>
            <person name="Obayashi M."/>
            <person name="Nishi T."/>
            <person name="Shibahara T."/>
            <person name="Tanaka T."/>
            <person name="Ishii S."/>
            <person name="Yamamoto J."/>
            <person name="Saito K."/>
            <person name="Kawai Y."/>
            <person name="Isono Y."/>
            <person name="Nakamura Y."/>
            <person name="Nagahari K."/>
            <person name="Murakami K."/>
            <person name="Yasuda T."/>
            <person name="Iwayanagi T."/>
            <person name="Wagatsuma M."/>
            <person name="Shiratori A."/>
            <person name="Sudo H."/>
            <person name="Hosoiri T."/>
            <person name="Kaku Y."/>
            <person name="Kodaira H."/>
            <person name="Kondo H."/>
            <person name="Sugawara M."/>
            <person name="Takahashi M."/>
            <person name="Kanda K."/>
            <person name="Yokoi T."/>
            <person name="Furuya T."/>
            <person name="Kikkawa E."/>
            <person name="Omura Y."/>
            <person name="Abe K."/>
            <person name="Kamihara K."/>
            <person name="Katsuta N."/>
            <person name="Sato K."/>
            <person name="Tanikawa M."/>
            <person name="Yamazaki M."/>
            <person name="Ninomiya K."/>
            <person name="Ishibashi T."/>
            <person name="Yamashita H."/>
            <person name="Murakawa K."/>
            <person name="Fujimori K."/>
            <person name="Tanai H."/>
            <person name="Kimata M."/>
            <person name="Watanabe M."/>
            <person name="Hiraoka S."/>
            <person name="Chiba Y."/>
            <person name="Ishida S."/>
            <person name="Ono Y."/>
            <person name="Takiguchi S."/>
            <person name="Watanabe S."/>
            <person name="Yosida M."/>
            <person name="Hotuta T."/>
            <person name="Kusano J."/>
            <person name="Kanehori K."/>
            <person name="Takahashi-Fujii A."/>
            <person name="Hara H."/>
            <person name="Tanase T.-O."/>
            <person name="Nomura Y."/>
            <person name="Togiya S."/>
            <person name="Komai F."/>
            <person name="Hara R."/>
            <person name="Takeuchi K."/>
            <person name="Arita M."/>
            <person name="Imose N."/>
            <person name="Musashino K."/>
            <person name="Yuuki H."/>
            <person name="Oshima A."/>
            <person name="Sasaki N."/>
            <person name="Aotsuka S."/>
            <person name="Yoshikawa Y."/>
            <person name="Matsunawa H."/>
            <person name="Ichihara T."/>
            <person name="Shiohata N."/>
            <person name="Sano S."/>
            <person name="Moriya S."/>
            <person name="Momiyama H."/>
            <person name="Satoh N."/>
            <person name="Takami S."/>
            <person name="Terashima Y."/>
            <person name="Suzuki O."/>
            <person name="Nakagawa S."/>
            <person name="Senoh A."/>
            <person name="Mizoguchi H."/>
            <person name="Goto Y."/>
            <person name="Shimizu F."/>
            <person name="Wakebe H."/>
            <person name="Hishigaki H."/>
            <person name="Watanabe T."/>
            <person name="Sugiyama A."/>
            <person name="Takemoto M."/>
            <person name="Kawakami B."/>
            <person name="Yamazaki M."/>
            <person name="Watanabe K."/>
            <person name="Kumagai A."/>
            <person name="Itakura S."/>
            <person name="Fukuzumi Y."/>
            <person name="Fujimori Y."/>
            <person name="Komiyama M."/>
            <person name="Tashiro H."/>
            <person name="Tanigami A."/>
            <person name="Fujiwara T."/>
            <person name="Ono T."/>
            <person name="Yamada K."/>
            <person name="Fujii Y."/>
            <person name="Ozaki K."/>
            <person name="Hirao M."/>
            <person name="Ohmori Y."/>
            <person name="Kawabata A."/>
            <person name="Hikiji T."/>
            <person name="Kobatake N."/>
            <person name="Inagaki H."/>
            <person name="Ikema Y."/>
            <person name="Okamoto S."/>
            <person name="Okitani R."/>
            <person name="Kawakami T."/>
            <person name="Noguchi S."/>
            <person name="Itoh T."/>
            <person name="Shigeta K."/>
            <person name="Senba T."/>
            <person name="Matsumura K."/>
            <person name="Nakajima Y."/>
            <person name="Mizuno T."/>
            <person name="Morinaga M."/>
            <person name="Sasaki M."/>
            <person name="Togashi T."/>
            <person name="Oyama M."/>
            <person name="Hata H."/>
            <person name="Watanabe M."/>
            <person name="Komatsu T."/>
            <person name="Mizushima-Sugano J."/>
            <person name="Satoh T."/>
            <person name="Shirai Y."/>
            <person name="Takahashi Y."/>
            <person name="Nakagawa K."/>
            <person name="Okumura K."/>
            <person name="Nagase T."/>
            <person name="Nomura N."/>
            <person name="Kikuchi H."/>
            <person name="Masuho Y."/>
            <person name="Yamashita R."/>
            <person name="Nakai K."/>
            <person name="Yada T."/>
            <person name="Nakamura Y."/>
            <person name="Ohara O."/>
            <person name="Isogai T."/>
            <person name="Sugano S."/>
        </authorList>
    </citation>
    <scope>NUCLEOTIDE SEQUENCE [LARGE SCALE MRNA] (ISOFORM A)</scope>
    <source>
        <tissue>Rectum</tissue>
    </source>
</reference>
<reference key="4">
    <citation type="journal article" date="2006" name="Nature">
        <title>Human chromosome 11 DNA sequence and analysis including novel gene identification.</title>
        <authorList>
            <person name="Taylor T.D."/>
            <person name="Noguchi H."/>
            <person name="Totoki Y."/>
            <person name="Toyoda A."/>
            <person name="Kuroki Y."/>
            <person name="Dewar K."/>
            <person name="Lloyd C."/>
            <person name="Itoh T."/>
            <person name="Takeda T."/>
            <person name="Kim D.-W."/>
            <person name="She X."/>
            <person name="Barlow K.F."/>
            <person name="Bloom T."/>
            <person name="Bruford E."/>
            <person name="Chang J.L."/>
            <person name="Cuomo C.A."/>
            <person name="Eichler E."/>
            <person name="FitzGerald M.G."/>
            <person name="Jaffe D.B."/>
            <person name="LaButti K."/>
            <person name="Nicol R."/>
            <person name="Park H.-S."/>
            <person name="Seaman C."/>
            <person name="Sougnez C."/>
            <person name="Yang X."/>
            <person name="Zimmer A.R."/>
            <person name="Zody M.C."/>
            <person name="Birren B.W."/>
            <person name="Nusbaum C."/>
            <person name="Fujiyama A."/>
            <person name="Hattori M."/>
            <person name="Rogers J."/>
            <person name="Lander E.S."/>
            <person name="Sakaki Y."/>
        </authorList>
    </citation>
    <scope>NUCLEOTIDE SEQUENCE [LARGE SCALE GENOMIC DNA]</scope>
</reference>
<reference key="5">
    <citation type="submission" date="2005-07" db="EMBL/GenBank/DDBJ databases">
        <authorList>
            <person name="Mural R.J."/>
            <person name="Istrail S."/>
            <person name="Sutton G.G."/>
            <person name="Florea L."/>
            <person name="Halpern A.L."/>
            <person name="Mobarry C.M."/>
            <person name="Lippert R."/>
            <person name="Walenz B."/>
            <person name="Shatkay H."/>
            <person name="Dew I."/>
            <person name="Miller J.R."/>
            <person name="Flanigan M.J."/>
            <person name="Edwards N.J."/>
            <person name="Bolanos R."/>
            <person name="Fasulo D."/>
            <person name="Halldorsson B.V."/>
            <person name="Hannenhalli S."/>
            <person name="Turner R."/>
            <person name="Yooseph S."/>
            <person name="Lu F."/>
            <person name="Nusskern D.R."/>
            <person name="Shue B.C."/>
            <person name="Zheng X.H."/>
            <person name="Zhong F."/>
            <person name="Delcher A.L."/>
            <person name="Huson D.H."/>
            <person name="Kravitz S.A."/>
            <person name="Mouchard L."/>
            <person name="Reinert K."/>
            <person name="Remington K.A."/>
            <person name="Clark A.G."/>
            <person name="Waterman M.S."/>
            <person name="Eichler E.E."/>
            <person name="Adams M.D."/>
            <person name="Hunkapiller M.W."/>
            <person name="Myers E.W."/>
            <person name="Venter J.C."/>
        </authorList>
    </citation>
    <scope>NUCLEOTIDE SEQUENCE [LARGE SCALE GENOMIC DNA]</scope>
</reference>
<reference key="6">
    <citation type="journal article" date="2004" name="Genome Res.">
        <title>The status, quality, and expansion of the NIH full-length cDNA project: the Mammalian Gene Collection (MGC).</title>
        <authorList>
            <consortium name="The MGC Project Team"/>
        </authorList>
    </citation>
    <scope>NUCLEOTIDE SEQUENCE [LARGE SCALE MRNA] (ISOFORM A)</scope>
    <source>
        <tissue>Blood</tissue>
    </source>
</reference>